<organism>
    <name type="scientific">Oryza sativa subsp. indica</name>
    <name type="common">Rice</name>
    <dbReference type="NCBI Taxonomy" id="39946"/>
    <lineage>
        <taxon>Eukaryota</taxon>
        <taxon>Viridiplantae</taxon>
        <taxon>Streptophyta</taxon>
        <taxon>Embryophyta</taxon>
        <taxon>Tracheophyta</taxon>
        <taxon>Spermatophyta</taxon>
        <taxon>Magnoliopsida</taxon>
        <taxon>Liliopsida</taxon>
        <taxon>Poales</taxon>
        <taxon>Poaceae</taxon>
        <taxon>BOP clade</taxon>
        <taxon>Oryzoideae</taxon>
        <taxon>Oryzeae</taxon>
        <taxon>Oryzinae</taxon>
        <taxon>Oryza</taxon>
        <taxon>Oryza sativa</taxon>
    </lineage>
</organism>
<geneLocation type="chloroplast"/>
<comment type="subcellular location">
    <subcellularLocation>
        <location>Plastid</location>
        <location>Chloroplast</location>
    </subcellularLocation>
</comment>
<comment type="similarity">
    <text evidence="1">Belongs to the ycf72 family.</text>
</comment>
<dbReference type="EMBL" id="AY522329">
    <property type="status" value="NOT_ANNOTATED_CDS"/>
    <property type="molecule type" value="Genomic_DNA"/>
</dbReference>
<dbReference type="STRING" id="39946.P0C309"/>
<dbReference type="Proteomes" id="UP000007015">
    <property type="component" value="Chloroplast"/>
</dbReference>
<dbReference type="GO" id="GO:0009507">
    <property type="term" value="C:chloroplast"/>
    <property type="evidence" value="ECO:0007669"/>
    <property type="project" value="UniProtKB-SubCell"/>
</dbReference>
<dbReference type="GO" id="GO:0009536">
    <property type="term" value="C:plastid"/>
    <property type="evidence" value="ECO:0000305"/>
    <property type="project" value="Gramene"/>
</dbReference>
<dbReference type="InterPro" id="IPR038860">
    <property type="entry name" value="YCF72"/>
</dbReference>
<dbReference type="PANTHER" id="PTHR37377">
    <property type="entry name" value="RIBULOSE BISPHOSPHATE CARBOXYLASE LARGE CHAIN"/>
    <property type="match status" value="1"/>
</dbReference>
<dbReference type="PANTHER" id="PTHR37377:SF2">
    <property type="entry name" value="SMALL RIBOSOMAL SUBUNIT PROTEIN US2C"/>
    <property type="match status" value="1"/>
</dbReference>
<name>YCF72_ORYSI</name>
<evidence type="ECO:0000305" key="1"/>
<gene>
    <name type="primary">ycf72-1</name>
</gene>
<gene>
    <name type="primary">ycf72-2</name>
</gene>
<protein>
    <recommendedName>
        <fullName>Uncharacterized protein ycf72</fullName>
    </recommendedName>
</protein>
<accession>P0C309</accession>
<sequence>MGAFPSPPPWGWSTGFITTPLTTGRLPSQHLDPALPKLFWFTPTLPTCPTVAKQFWDTKRTSPDGNLKVADLPSFAISFATAPAALANCPPLPRVISMLCMAVPKGISVEVDSSFLSKNPFPNCTSFFQSIRLSRCI</sequence>
<keyword id="KW-0150">Chloroplast</keyword>
<keyword id="KW-0934">Plastid</keyword>
<keyword id="KW-1185">Reference proteome</keyword>
<reference key="1">
    <citation type="journal article" date="2004" name="Plant Physiol.">
        <title>A comparison of rice chloroplast genomes.</title>
        <authorList>
            <person name="Tang J."/>
            <person name="Xia H."/>
            <person name="Cao M."/>
            <person name="Zhang X."/>
            <person name="Zeng W."/>
            <person name="Hu S."/>
            <person name="Tong W."/>
            <person name="Wang J."/>
            <person name="Wang J."/>
            <person name="Yu J."/>
            <person name="Yang H."/>
            <person name="Zhu L."/>
        </authorList>
    </citation>
    <scope>NUCLEOTIDE SEQUENCE [LARGE SCALE GENOMIC DNA]</scope>
    <source>
        <strain>cv. 93-11</strain>
    </source>
</reference>
<proteinExistence type="inferred from homology"/>
<feature type="chain" id="PRO_0000288623" description="Uncharacterized protein ycf72">
    <location>
        <begin position="1"/>
        <end position="137"/>
    </location>
</feature>